<keyword id="KW-0687">Ribonucleoprotein</keyword>
<keyword id="KW-0689">Ribosomal protein</keyword>
<sequence length="77" mass="8561">MAEEVKFSPYEDAVAGIVIQILGRTGIAGEVTQVKVKILEGRDKGRVLTRNIKGPVRLGDIVMLRETEREARRISAR</sequence>
<evidence type="ECO:0000255" key="1">
    <source>
        <dbReference type="HAMAP-Rule" id="MF_00292"/>
    </source>
</evidence>
<evidence type="ECO:0000305" key="2"/>
<gene>
    <name evidence="1" type="primary">rps28e</name>
    <name type="ordered locus">Pars_1757</name>
</gene>
<name>RS28_PYRAR</name>
<feature type="chain" id="PRO_1000115085" description="Small ribosomal subunit protein eS28">
    <location>
        <begin position="1"/>
        <end position="77"/>
    </location>
</feature>
<comment type="similarity">
    <text evidence="1">Belongs to the eukaryotic ribosomal protein eS28 family.</text>
</comment>
<accession>A4WLP1</accession>
<reference key="1">
    <citation type="submission" date="2007-04" db="EMBL/GenBank/DDBJ databases">
        <title>Complete sequence of Pyrobaculum arsenaticum DSM 13514.</title>
        <authorList>
            <consortium name="US DOE Joint Genome Institute"/>
            <person name="Copeland A."/>
            <person name="Lucas S."/>
            <person name="Lapidus A."/>
            <person name="Barry K."/>
            <person name="Glavina del Rio T."/>
            <person name="Dalin E."/>
            <person name="Tice H."/>
            <person name="Pitluck S."/>
            <person name="Chain P."/>
            <person name="Malfatti S."/>
            <person name="Shin M."/>
            <person name="Vergez L."/>
            <person name="Schmutz J."/>
            <person name="Larimer F."/>
            <person name="Land M."/>
            <person name="Hauser L."/>
            <person name="Kyrpides N."/>
            <person name="Mikhailova N."/>
            <person name="Cozen A.E."/>
            <person name="Fitz-Gibbon S.T."/>
            <person name="House C.H."/>
            <person name="Saltikov C."/>
            <person name="Lowe T.M."/>
            <person name="Richardson P."/>
        </authorList>
    </citation>
    <scope>NUCLEOTIDE SEQUENCE [LARGE SCALE GENOMIC DNA]</scope>
    <source>
        <strain>ATCC 700994 / DSM 13514 / JCM 11321 / PZ6</strain>
    </source>
</reference>
<dbReference type="EMBL" id="CP000660">
    <property type="protein sequence ID" value="ABP51308.1"/>
    <property type="molecule type" value="Genomic_DNA"/>
</dbReference>
<dbReference type="SMR" id="A4WLP1"/>
<dbReference type="STRING" id="340102.Pars_1757"/>
<dbReference type="KEGG" id="pas:Pars_1757"/>
<dbReference type="HOGENOM" id="CLU_178987_2_1_2"/>
<dbReference type="OrthoDB" id="7620at2157"/>
<dbReference type="PhylomeDB" id="A4WLP1"/>
<dbReference type="Proteomes" id="UP000001567">
    <property type="component" value="Chromosome"/>
</dbReference>
<dbReference type="GO" id="GO:0022627">
    <property type="term" value="C:cytosolic small ribosomal subunit"/>
    <property type="evidence" value="ECO:0007669"/>
    <property type="project" value="TreeGrafter"/>
</dbReference>
<dbReference type="GO" id="GO:0003735">
    <property type="term" value="F:structural constituent of ribosome"/>
    <property type="evidence" value="ECO:0007669"/>
    <property type="project" value="InterPro"/>
</dbReference>
<dbReference type="GO" id="GO:0030490">
    <property type="term" value="P:maturation of SSU-rRNA"/>
    <property type="evidence" value="ECO:0007669"/>
    <property type="project" value="TreeGrafter"/>
</dbReference>
<dbReference type="GO" id="GO:0000028">
    <property type="term" value="P:ribosomal small subunit assembly"/>
    <property type="evidence" value="ECO:0007669"/>
    <property type="project" value="TreeGrafter"/>
</dbReference>
<dbReference type="GO" id="GO:0006412">
    <property type="term" value="P:translation"/>
    <property type="evidence" value="ECO:0007669"/>
    <property type="project" value="UniProtKB-UniRule"/>
</dbReference>
<dbReference type="CDD" id="cd04457">
    <property type="entry name" value="S1_S28E"/>
    <property type="match status" value="1"/>
</dbReference>
<dbReference type="FunFam" id="2.40.50.140:FF:000145">
    <property type="entry name" value="30S ribosomal protein S28e"/>
    <property type="match status" value="1"/>
</dbReference>
<dbReference type="Gene3D" id="2.40.50.140">
    <property type="entry name" value="Nucleic acid-binding proteins"/>
    <property type="match status" value="1"/>
</dbReference>
<dbReference type="HAMAP" id="MF_00292">
    <property type="entry name" value="Ribosomal_eS28"/>
    <property type="match status" value="1"/>
</dbReference>
<dbReference type="InterPro" id="IPR012340">
    <property type="entry name" value="NA-bd_OB-fold"/>
</dbReference>
<dbReference type="InterPro" id="IPR000289">
    <property type="entry name" value="Ribosomal_eS28"/>
</dbReference>
<dbReference type="InterPro" id="IPR028626">
    <property type="entry name" value="Ribosomal_eS28_CS"/>
</dbReference>
<dbReference type="NCBIfam" id="NF003080">
    <property type="entry name" value="PRK04007.1"/>
    <property type="match status" value="1"/>
</dbReference>
<dbReference type="PANTHER" id="PTHR10769">
    <property type="entry name" value="40S RIBOSOMAL PROTEIN S28"/>
    <property type="match status" value="1"/>
</dbReference>
<dbReference type="PANTHER" id="PTHR10769:SF3">
    <property type="entry name" value="SMALL RIBOSOMAL SUBUNIT PROTEIN ES28"/>
    <property type="match status" value="1"/>
</dbReference>
<dbReference type="Pfam" id="PF01200">
    <property type="entry name" value="Ribosomal_S28e"/>
    <property type="match status" value="1"/>
</dbReference>
<dbReference type="SUPFAM" id="SSF50249">
    <property type="entry name" value="Nucleic acid-binding proteins"/>
    <property type="match status" value="1"/>
</dbReference>
<dbReference type="PROSITE" id="PS00961">
    <property type="entry name" value="RIBOSOMAL_S28E"/>
    <property type="match status" value="1"/>
</dbReference>
<organism>
    <name type="scientific">Pyrobaculum arsenaticum (strain DSM 13514 / JCM 11321 / PZ6)</name>
    <dbReference type="NCBI Taxonomy" id="340102"/>
    <lineage>
        <taxon>Archaea</taxon>
        <taxon>Thermoproteota</taxon>
        <taxon>Thermoprotei</taxon>
        <taxon>Thermoproteales</taxon>
        <taxon>Thermoproteaceae</taxon>
        <taxon>Pyrobaculum</taxon>
    </lineage>
</organism>
<proteinExistence type="inferred from homology"/>
<protein>
    <recommendedName>
        <fullName evidence="1">Small ribosomal subunit protein eS28</fullName>
    </recommendedName>
    <alternativeName>
        <fullName evidence="2">30S ribosomal protein S28e</fullName>
    </alternativeName>
</protein>